<dbReference type="EC" id="3.2.1.18"/>
<dbReference type="EMBL" id="D28493">
    <property type="protein sequence ID" value="BAA05853.1"/>
    <property type="molecule type" value="Genomic_DNA"/>
</dbReference>
<dbReference type="EMBL" id="AB102772">
    <property type="protein sequence ID" value="BAC56895.2"/>
    <property type="molecule type" value="Genomic_DNA"/>
</dbReference>
<dbReference type="EMBL" id="AP006841">
    <property type="protein sequence ID" value="BAD48476.1"/>
    <property type="molecule type" value="Genomic_DNA"/>
</dbReference>
<dbReference type="EMBL" id="M31663">
    <property type="protein sequence ID" value="AAA22912.1"/>
    <property type="molecule type" value="Genomic_DNA"/>
</dbReference>
<dbReference type="PIR" id="JC2500">
    <property type="entry name" value="JC2500"/>
</dbReference>
<dbReference type="RefSeq" id="WP_005786655.1">
    <property type="nucleotide sequence ID" value="NC_006347.1"/>
</dbReference>
<dbReference type="RefSeq" id="YP_099010.1">
    <property type="nucleotide sequence ID" value="NC_006347.1"/>
</dbReference>
<dbReference type="SMR" id="P31206"/>
<dbReference type="STRING" id="295405.BF1729"/>
<dbReference type="CAZy" id="GH33">
    <property type="family name" value="Glycoside Hydrolase Family 33"/>
</dbReference>
<dbReference type="KEGG" id="bfr:BF1729"/>
<dbReference type="PATRIC" id="fig|295405.11.peg.1678"/>
<dbReference type="HOGENOM" id="CLU_024620_0_0_10"/>
<dbReference type="OrthoDB" id="7294637at2"/>
<dbReference type="Proteomes" id="UP000002197">
    <property type="component" value="Chromosome"/>
</dbReference>
<dbReference type="GO" id="GO:0005737">
    <property type="term" value="C:cytoplasm"/>
    <property type="evidence" value="ECO:0007669"/>
    <property type="project" value="TreeGrafter"/>
</dbReference>
<dbReference type="GO" id="GO:0043231">
    <property type="term" value="C:intracellular membrane-bounded organelle"/>
    <property type="evidence" value="ECO:0007669"/>
    <property type="project" value="TreeGrafter"/>
</dbReference>
<dbReference type="GO" id="GO:0016020">
    <property type="term" value="C:membrane"/>
    <property type="evidence" value="ECO:0007669"/>
    <property type="project" value="TreeGrafter"/>
</dbReference>
<dbReference type="GO" id="GO:0042597">
    <property type="term" value="C:periplasmic space"/>
    <property type="evidence" value="ECO:0007669"/>
    <property type="project" value="UniProtKB-SubCell"/>
</dbReference>
<dbReference type="GO" id="GO:0004308">
    <property type="term" value="F:exo-alpha-sialidase activity"/>
    <property type="evidence" value="ECO:0007669"/>
    <property type="project" value="UniProtKB-EC"/>
</dbReference>
<dbReference type="GO" id="GO:0006689">
    <property type="term" value="P:ganglioside catabolic process"/>
    <property type="evidence" value="ECO:0007669"/>
    <property type="project" value="TreeGrafter"/>
</dbReference>
<dbReference type="GO" id="GO:0009313">
    <property type="term" value="P:oligosaccharide catabolic process"/>
    <property type="evidence" value="ECO:0007669"/>
    <property type="project" value="TreeGrafter"/>
</dbReference>
<dbReference type="CDD" id="cd15482">
    <property type="entry name" value="Sialidase_non-viral"/>
    <property type="match status" value="1"/>
</dbReference>
<dbReference type="Gene3D" id="2.120.10.10">
    <property type="match status" value="1"/>
</dbReference>
<dbReference type="Gene3D" id="2.60.40.1290">
    <property type="match status" value="1"/>
</dbReference>
<dbReference type="InterPro" id="IPR011040">
    <property type="entry name" value="Sialidase"/>
</dbReference>
<dbReference type="InterPro" id="IPR026856">
    <property type="entry name" value="Sialidase_fam"/>
</dbReference>
<dbReference type="InterPro" id="IPR029456">
    <property type="entry name" value="Sialidase_N"/>
</dbReference>
<dbReference type="InterPro" id="IPR036278">
    <property type="entry name" value="Sialidase_sf"/>
</dbReference>
<dbReference type="InterPro" id="IPR008377">
    <property type="entry name" value="Sialidase_trypan"/>
</dbReference>
<dbReference type="PANTHER" id="PTHR10628:SF30">
    <property type="entry name" value="EXO-ALPHA-SIALIDASE"/>
    <property type="match status" value="1"/>
</dbReference>
<dbReference type="PANTHER" id="PTHR10628">
    <property type="entry name" value="SIALIDASE"/>
    <property type="match status" value="1"/>
</dbReference>
<dbReference type="Pfam" id="PF13859">
    <property type="entry name" value="BNR_3"/>
    <property type="match status" value="1"/>
</dbReference>
<dbReference type="Pfam" id="PF14873">
    <property type="entry name" value="BNR_assoc_N"/>
    <property type="match status" value="1"/>
</dbReference>
<dbReference type="PRINTS" id="PR01803">
    <property type="entry name" value="TCSIALIDASE"/>
</dbReference>
<dbReference type="SUPFAM" id="SSF50939">
    <property type="entry name" value="Sialidases"/>
    <property type="match status" value="1"/>
</dbReference>
<accession>P31206</accession>
<accession>Q45145</accession>
<accession>Q64VK0</accession>
<proteinExistence type="inferred from homology"/>
<feature type="signal peptide" evidence="2">
    <location>
        <begin position="1"/>
        <end position="22"/>
    </location>
</feature>
<feature type="chain" id="PRO_0000012029" description="Sialidase">
    <location>
        <begin position="23"/>
        <end position="544"/>
    </location>
</feature>
<feature type="repeat" description="BNR 1">
    <location>
        <begin position="239"/>
        <end position="250"/>
    </location>
</feature>
<feature type="repeat" description="BNR 2">
    <location>
        <begin position="318"/>
        <end position="329"/>
    </location>
</feature>
<feature type="repeat" description="BNR 3">
    <location>
        <begin position="378"/>
        <end position="389"/>
    </location>
</feature>
<feature type="repeat" description="BNR 4">
    <location>
        <begin position="425"/>
        <end position="436"/>
    </location>
</feature>
<feature type="repeat" description="BNR 5">
    <location>
        <begin position="485"/>
        <end position="496"/>
    </location>
</feature>
<feature type="active site" evidence="2">
    <location>
        <position position="399"/>
    </location>
</feature>
<feature type="binding site" evidence="1">
    <location>
        <position position="415"/>
    </location>
    <ligand>
        <name>substrate</name>
    </ligand>
</feature>
<feature type="binding site" evidence="1">
    <location>
        <position position="479"/>
    </location>
    <ligand>
        <name>substrate</name>
    </ligand>
</feature>
<feature type="sequence conflict" description="In Ref. 1; BAA05853." evidence="3" ref="1">
    <original>D</original>
    <variation>A</variation>
    <location>
        <position position="197"/>
    </location>
</feature>
<feature type="sequence conflict" description="In Ref. 4; AAA22912." evidence="3" ref="4">
    <original>V</original>
    <variation>A</variation>
    <location>
        <position position="405"/>
    </location>
</feature>
<reference key="1">
    <citation type="journal article" date="1994" name="Biochem. Biophys. Res. Commun.">
        <title>Complete sequence of the Bacteroides fragilis YCH46 neuraminidase-encoding gene.</title>
        <authorList>
            <person name="Akimoto S."/>
            <person name="Ono T."/>
            <person name="Tsutsui H."/>
            <person name="Kinouchi T."/>
            <person name="Kataoka K."/>
            <person name="Ohnishi Y."/>
        </authorList>
    </citation>
    <scope>NUCLEOTIDE SEQUENCE [GENOMIC DNA]</scope>
    <source>
        <strain>YCH46</strain>
    </source>
</reference>
<reference key="2">
    <citation type="submission" date="2005-01" db="EMBL/GenBank/DDBJ databases">
        <title>Characterization of a gene cluster for degradation of sialoglycoconjugates in Bacteroides fragilis strain YCH46.</title>
        <authorList>
            <person name="Nakayama H."/>
            <person name="Kuwahara T."/>
            <person name="Iwasa T."/>
            <person name="Okamoto S."/>
            <person name="Tsuchihashi Y."/>
            <person name="Nakanishi K."/>
            <person name="Kataoka K."/>
            <person name="Arimochi H."/>
            <person name="Ohnishi Y."/>
        </authorList>
    </citation>
    <scope>NUCLEOTIDE SEQUENCE [GENOMIC DNA]</scope>
    <source>
        <strain>YCH46</strain>
    </source>
</reference>
<reference key="3">
    <citation type="journal article" date="2004" name="Proc. Natl. Acad. Sci. U.S.A.">
        <title>Genomic analysis of Bacteroides fragilis reveals extensive DNA inversions regulating cell surface adaptation.</title>
        <authorList>
            <person name="Kuwahara T."/>
            <person name="Yamashita A."/>
            <person name="Hirakawa H."/>
            <person name="Nakayama H."/>
            <person name="Toh H."/>
            <person name="Okada N."/>
            <person name="Kuhara S."/>
            <person name="Hattori M."/>
            <person name="Hayashi T."/>
            <person name="Ohnishi Y."/>
        </authorList>
    </citation>
    <scope>NUCLEOTIDE SEQUENCE [LARGE SCALE GENOMIC DNA]</scope>
    <source>
        <strain>YCH46</strain>
    </source>
</reference>
<reference key="4">
    <citation type="journal article" date="1990" name="J. Bacteriol.">
        <title>Cloning and expression of the Bacteroides fragilis TAL2480 neuraminidase gene, nanH, in Escherichia coli.</title>
        <authorList>
            <person name="Russo T.A."/>
            <person name="Thompson J.S."/>
            <person name="Godoy V.G."/>
            <person name="Malamy M.H."/>
        </authorList>
    </citation>
    <scope>NUCLEOTIDE SEQUENCE [GENOMIC DNA] OF 235-500</scope>
    <source>
        <strain>TAL2480</strain>
    </source>
</reference>
<organism>
    <name type="scientific">Bacteroides fragilis (strain YCH46)</name>
    <dbReference type="NCBI Taxonomy" id="295405"/>
    <lineage>
        <taxon>Bacteria</taxon>
        <taxon>Pseudomonadati</taxon>
        <taxon>Bacteroidota</taxon>
        <taxon>Bacteroidia</taxon>
        <taxon>Bacteroidales</taxon>
        <taxon>Bacteroidaceae</taxon>
        <taxon>Bacteroides</taxon>
    </lineage>
</organism>
<name>NANH_BACFR</name>
<protein>
    <recommendedName>
        <fullName>Sialidase</fullName>
        <ecNumber>3.2.1.18</ecNumber>
    </recommendedName>
    <alternativeName>
        <fullName>Neuraminidase</fullName>
    </alternativeName>
</protein>
<keyword id="KW-0326">Glycosidase</keyword>
<keyword id="KW-0378">Hydrolase</keyword>
<keyword id="KW-0574">Periplasm</keyword>
<keyword id="KW-0677">Repeat</keyword>
<keyword id="KW-0732">Signal</keyword>
<evidence type="ECO:0000250" key="1"/>
<evidence type="ECO:0000255" key="2"/>
<evidence type="ECO:0000305" key="3"/>
<gene>
    <name type="primary">nanH</name>
    <name type="ordered locus">BF1729</name>
</gene>
<sequence>MKKAVILFSLFCFLCAIPVVQAADTIFVRETRIPILIERQDNVLFYLRLDAKESQTLNDVVLNLGEGVNLSEIQSIKLYYGGTEALQDSGKKRFAPVGYISSNTPGKTLAANPSYSIKKSEVTNPGNQVVLKGDQKLFPGINYFWISLQMKPGTSLTSKVTADIASITLDGKKALLDVVSENGIEHRMGVGVRHAGDDNSAAFRIPGLVTTNKGTLLGVYDVRYNSSVDLQEHVDVGLSRSTDGGKTWEKMRLPLAFGEFGGLPAGQNGVGDPSILVDTKTNNVWVVAAWTHGMGNQRAWWSSHPGMDMNHTAQLVLAKSTDDGKTWSAPINITEQVKDPSWYFLLQGPGRGITMSDGTLVFPTQFIDSTRVPNAGIMYSKDGGKNWKMHNYARTNTTEAQVAEVEPGVLMLNMRDNRGGSRAVAITKDLGKTWTEHESSRKALPESVCMASLISVKAKDNVLGKDLLIFSNPNTTKGRYNTTIKISLDGGVTWSPEHQLLLDEGNNWGYSCLSMIDKETIGILYESSVAHMTFQAVKLKDIIK</sequence>
<comment type="function">
    <text>Sialidases have been suggested to be pathogenic factors in microbial infections.</text>
</comment>
<comment type="catalytic activity">
    <reaction>
        <text>Hydrolysis of alpha-(2-&gt;3)-, alpha-(2-&gt;6)-, alpha-(2-&gt;8)- glycosidic linkages of terminal sialic acid residues in oligosaccharides, glycoproteins, glycolipids, colominic acid and synthetic substrates.</text>
        <dbReference type="EC" id="3.2.1.18"/>
    </reaction>
</comment>
<comment type="subcellular location">
    <subcellularLocation>
        <location>Periplasm</location>
    </subcellularLocation>
</comment>
<comment type="similarity">
    <text evidence="3">Belongs to the glycosyl hydrolase 33 family.</text>
</comment>